<sequence>MPTINQLVRKPRQSKIKKSDSPALNKGFNSKKKKFTDLNSPQKRGVCTRVGTMTPKKPNSALRKYARVRLSNNIEINAYIPGIGHNLQEHSVVLVRGGRVKDLPGVRYHIVRGALDTSGVDGRRQGRSLYGTKKPKN</sequence>
<reference key="1">
    <citation type="journal article" date="2001" name="Lancet">
        <title>Whole genome sequencing of meticillin-resistant Staphylococcus aureus.</title>
        <authorList>
            <person name="Kuroda M."/>
            <person name="Ohta T."/>
            <person name="Uchiyama I."/>
            <person name="Baba T."/>
            <person name="Yuzawa H."/>
            <person name="Kobayashi I."/>
            <person name="Cui L."/>
            <person name="Oguchi A."/>
            <person name="Aoki K."/>
            <person name="Nagai Y."/>
            <person name="Lian J.-Q."/>
            <person name="Ito T."/>
            <person name="Kanamori M."/>
            <person name="Matsumaru H."/>
            <person name="Maruyama A."/>
            <person name="Murakami H."/>
            <person name="Hosoyama A."/>
            <person name="Mizutani-Ui Y."/>
            <person name="Takahashi N.K."/>
            <person name="Sawano T."/>
            <person name="Inoue R."/>
            <person name="Kaito C."/>
            <person name="Sekimizu K."/>
            <person name="Hirakawa H."/>
            <person name="Kuhara S."/>
            <person name="Goto S."/>
            <person name="Yabuzaki J."/>
            <person name="Kanehisa M."/>
            <person name="Yamashita A."/>
            <person name="Oshima K."/>
            <person name="Furuya K."/>
            <person name="Yoshino C."/>
            <person name="Shiba T."/>
            <person name="Hattori M."/>
            <person name="Ogasawara N."/>
            <person name="Hayashi H."/>
            <person name="Hiramatsu K."/>
        </authorList>
    </citation>
    <scope>NUCLEOTIDE SEQUENCE [LARGE SCALE GENOMIC DNA]</scope>
    <source>
        <strain>N315</strain>
    </source>
</reference>
<reference key="2">
    <citation type="submission" date="2007-10" db="UniProtKB">
        <title>Shotgun proteomic analysis of total and membrane protein extracts of S. aureus strain N315.</title>
        <authorList>
            <person name="Vaezzadeh A.R."/>
            <person name="Deshusses J."/>
            <person name="Lescuyer P."/>
            <person name="Hochstrasser D.F."/>
        </authorList>
    </citation>
    <scope>IDENTIFICATION BY MASS SPECTROMETRY [LARGE SCALE ANALYSIS]</scope>
    <source>
        <strain>N315</strain>
    </source>
</reference>
<comment type="function">
    <text evidence="2">With S4 and S5 plays an important role in translational accuracy.</text>
</comment>
<comment type="function">
    <text evidence="2">Interacts with and stabilizes bases of the 16S rRNA that are involved in tRNA selection in the A site and with the mRNA backbone. Located at the interface of the 30S and 50S subunits, it traverses the body of the 30S subunit contacting proteins on the other side and probably holding the rRNA structure together. The combined cluster of proteins S8, S12 and S17 appears to hold together the shoulder and platform of the 30S subunit.</text>
</comment>
<comment type="subunit">
    <text evidence="2">Part of the 30S ribosomal subunit. Contacts proteins S8 and S17. May interact with IF1 in the 30S initiation complex.</text>
</comment>
<comment type="similarity">
    <text evidence="2">Belongs to the universal ribosomal protein uS12 family.</text>
</comment>
<gene>
    <name evidence="2" type="primary">rpsL</name>
    <name type="ordered locus">SA0503</name>
</gene>
<keyword id="KW-0488">Methylation</keyword>
<keyword id="KW-0687">Ribonucleoprotein</keyword>
<keyword id="KW-0689">Ribosomal protein</keyword>
<keyword id="KW-0694">RNA-binding</keyword>
<keyword id="KW-0699">rRNA-binding</keyword>
<keyword id="KW-0820">tRNA-binding</keyword>
<organism>
    <name type="scientific">Staphylococcus aureus (strain N315)</name>
    <dbReference type="NCBI Taxonomy" id="158879"/>
    <lineage>
        <taxon>Bacteria</taxon>
        <taxon>Bacillati</taxon>
        <taxon>Bacillota</taxon>
        <taxon>Bacilli</taxon>
        <taxon>Bacillales</taxon>
        <taxon>Staphylococcaceae</taxon>
        <taxon>Staphylococcus</taxon>
    </lineage>
</organism>
<feature type="chain" id="PRO_0000146310" description="Small ribosomal subunit protein uS12">
    <location>
        <begin position="1"/>
        <end position="137"/>
    </location>
</feature>
<feature type="region of interest" description="Disordered" evidence="3">
    <location>
        <begin position="1"/>
        <end position="55"/>
    </location>
</feature>
<feature type="region of interest" description="Disordered" evidence="3">
    <location>
        <begin position="118"/>
        <end position="137"/>
    </location>
</feature>
<feature type="modified residue" description="3-methylthioaspartic acid" evidence="1">
    <location>
        <position position="102"/>
    </location>
</feature>
<evidence type="ECO:0000250" key="1"/>
<evidence type="ECO:0000255" key="2">
    <source>
        <dbReference type="HAMAP-Rule" id="MF_00403"/>
    </source>
</evidence>
<evidence type="ECO:0000256" key="3">
    <source>
        <dbReference type="SAM" id="MobiDB-lite"/>
    </source>
</evidence>
<evidence type="ECO:0000305" key="4"/>
<proteinExistence type="evidence at protein level"/>
<name>RS12_STAAN</name>
<dbReference type="EMBL" id="BA000018">
    <property type="protein sequence ID" value="BAB41734.1"/>
    <property type="molecule type" value="Genomic_DNA"/>
</dbReference>
<dbReference type="PIR" id="C89822">
    <property type="entry name" value="C89822"/>
</dbReference>
<dbReference type="RefSeq" id="WP_001142337.1">
    <property type="nucleotide sequence ID" value="NC_002745.2"/>
</dbReference>
<dbReference type="SMR" id="P0A0G8"/>
<dbReference type="EnsemblBacteria" id="BAB41734">
    <property type="protein sequence ID" value="BAB41734"/>
    <property type="gene ID" value="BAB41734"/>
</dbReference>
<dbReference type="GeneID" id="98344879"/>
<dbReference type="KEGG" id="sau:SA0503"/>
<dbReference type="HOGENOM" id="CLU_104295_1_2_9"/>
<dbReference type="GO" id="GO:0015935">
    <property type="term" value="C:small ribosomal subunit"/>
    <property type="evidence" value="ECO:0007669"/>
    <property type="project" value="InterPro"/>
</dbReference>
<dbReference type="GO" id="GO:0019843">
    <property type="term" value="F:rRNA binding"/>
    <property type="evidence" value="ECO:0007669"/>
    <property type="project" value="UniProtKB-UniRule"/>
</dbReference>
<dbReference type="GO" id="GO:0003735">
    <property type="term" value="F:structural constituent of ribosome"/>
    <property type="evidence" value="ECO:0007669"/>
    <property type="project" value="InterPro"/>
</dbReference>
<dbReference type="GO" id="GO:0000049">
    <property type="term" value="F:tRNA binding"/>
    <property type="evidence" value="ECO:0007669"/>
    <property type="project" value="UniProtKB-UniRule"/>
</dbReference>
<dbReference type="GO" id="GO:0006412">
    <property type="term" value="P:translation"/>
    <property type="evidence" value="ECO:0007669"/>
    <property type="project" value="UniProtKB-UniRule"/>
</dbReference>
<dbReference type="CDD" id="cd03368">
    <property type="entry name" value="Ribosomal_S12"/>
    <property type="match status" value="1"/>
</dbReference>
<dbReference type="FunFam" id="2.40.50.140:FF:000001">
    <property type="entry name" value="30S ribosomal protein S12"/>
    <property type="match status" value="1"/>
</dbReference>
<dbReference type="Gene3D" id="2.40.50.140">
    <property type="entry name" value="Nucleic acid-binding proteins"/>
    <property type="match status" value="1"/>
</dbReference>
<dbReference type="HAMAP" id="MF_00403_B">
    <property type="entry name" value="Ribosomal_uS12_B"/>
    <property type="match status" value="1"/>
</dbReference>
<dbReference type="InterPro" id="IPR012340">
    <property type="entry name" value="NA-bd_OB-fold"/>
</dbReference>
<dbReference type="InterPro" id="IPR006032">
    <property type="entry name" value="Ribosomal_uS12"/>
</dbReference>
<dbReference type="InterPro" id="IPR005679">
    <property type="entry name" value="Ribosomal_uS12_bac"/>
</dbReference>
<dbReference type="NCBIfam" id="TIGR00981">
    <property type="entry name" value="rpsL_bact"/>
    <property type="match status" value="1"/>
</dbReference>
<dbReference type="PANTHER" id="PTHR11652">
    <property type="entry name" value="30S RIBOSOMAL PROTEIN S12 FAMILY MEMBER"/>
    <property type="match status" value="1"/>
</dbReference>
<dbReference type="Pfam" id="PF00164">
    <property type="entry name" value="Ribosom_S12_S23"/>
    <property type="match status" value="1"/>
</dbReference>
<dbReference type="PIRSF" id="PIRSF002133">
    <property type="entry name" value="Ribosomal_S12/S23"/>
    <property type="match status" value="1"/>
</dbReference>
<dbReference type="PRINTS" id="PR01034">
    <property type="entry name" value="RIBOSOMALS12"/>
</dbReference>
<dbReference type="SUPFAM" id="SSF50249">
    <property type="entry name" value="Nucleic acid-binding proteins"/>
    <property type="match status" value="1"/>
</dbReference>
<dbReference type="PROSITE" id="PS00055">
    <property type="entry name" value="RIBOSOMAL_S12"/>
    <property type="match status" value="1"/>
</dbReference>
<accession>P0A0G8</accession>
<accession>P48942</accession>
<protein>
    <recommendedName>
        <fullName evidence="2">Small ribosomal subunit protein uS12</fullName>
    </recommendedName>
    <alternativeName>
        <fullName evidence="4">30S ribosomal protein S12</fullName>
    </alternativeName>
</protein>